<feature type="chain" id="PRO_0000374759" description="Ribosomal protein uS12 methylthiotransferase RimO">
    <location>
        <begin position="1"/>
        <end position="451"/>
    </location>
</feature>
<feature type="domain" description="MTTase N-terminal" evidence="1">
    <location>
        <begin position="17"/>
        <end position="127"/>
    </location>
</feature>
<feature type="domain" description="Radical SAM core" evidence="2">
    <location>
        <begin position="146"/>
        <end position="383"/>
    </location>
</feature>
<feature type="domain" description="TRAM" evidence="1">
    <location>
        <begin position="386"/>
        <end position="451"/>
    </location>
</feature>
<feature type="binding site" evidence="1">
    <location>
        <position position="26"/>
    </location>
    <ligand>
        <name>[4Fe-4S] cluster</name>
        <dbReference type="ChEBI" id="CHEBI:49883"/>
        <label>1</label>
    </ligand>
</feature>
<feature type="binding site" evidence="1">
    <location>
        <position position="62"/>
    </location>
    <ligand>
        <name>[4Fe-4S] cluster</name>
        <dbReference type="ChEBI" id="CHEBI:49883"/>
        <label>1</label>
    </ligand>
</feature>
<feature type="binding site" evidence="1">
    <location>
        <position position="91"/>
    </location>
    <ligand>
        <name>[4Fe-4S] cluster</name>
        <dbReference type="ChEBI" id="CHEBI:49883"/>
        <label>1</label>
    </ligand>
</feature>
<feature type="binding site" evidence="1">
    <location>
        <position position="160"/>
    </location>
    <ligand>
        <name>[4Fe-4S] cluster</name>
        <dbReference type="ChEBI" id="CHEBI:49883"/>
        <label>2</label>
        <note>4Fe-4S-S-AdoMet</note>
    </ligand>
</feature>
<feature type="binding site" evidence="1">
    <location>
        <position position="164"/>
    </location>
    <ligand>
        <name>[4Fe-4S] cluster</name>
        <dbReference type="ChEBI" id="CHEBI:49883"/>
        <label>2</label>
        <note>4Fe-4S-S-AdoMet</note>
    </ligand>
</feature>
<feature type="binding site" evidence="1">
    <location>
        <position position="167"/>
    </location>
    <ligand>
        <name>[4Fe-4S] cluster</name>
        <dbReference type="ChEBI" id="CHEBI:49883"/>
        <label>2</label>
        <note>4Fe-4S-S-AdoMet</note>
    </ligand>
</feature>
<accession>B3PGP3</accession>
<gene>
    <name evidence="1" type="primary">rimO</name>
    <name type="ordered locus">CJA_1894</name>
</gene>
<protein>
    <recommendedName>
        <fullName evidence="1">Ribosomal protein uS12 methylthiotransferase RimO</fullName>
        <shortName evidence="1">uS12 MTTase</shortName>
        <shortName evidence="1">uS12 methylthiotransferase</shortName>
        <ecNumber evidence="1">2.8.4.4</ecNumber>
    </recommendedName>
    <alternativeName>
        <fullName evidence="1">Ribosomal protein uS12 (aspartate-C(3))-methylthiotransferase</fullName>
    </alternativeName>
    <alternativeName>
        <fullName evidence="1">Ribosome maturation factor RimO</fullName>
    </alternativeName>
</protein>
<proteinExistence type="inferred from homology"/>
<name>RIMO_CELJU</name>
<sequence>MTTSGCNPMKSSSTSNPTIGFVSLGCPKNLVDSERILTQLRMEGYNIVPSYNDADMVIVNTCGFIDSAVQESLGAIGEALNENGKVLVTGCLGAKKDEIIQVHPNVLGITGAHAYEEVLAQVHEHLPPSQTHNPFTDLVPPQGIKLTPRHYAYLKISEGCNHSCSFCIIPDMRGKLVSRPIGQVMGEAERLVKAGVKELLVISQDTSAYGVDIKHRTDFWDGRPLKTDMYQLAAALGELGVWVRLHYVYPYPHVDNVIPLMAQGKVLPYLDIPFQHASPTLLRKMRRPGQVEKTLERIKNWREQVPNLTLRSTFIVGFPGETEADFEELLGFLEEAQLDRVGCFQYSPVEGAKANELPDPVLDEIKQARYDRFMQLQQRISTERLKQKVGQTLPVLIDEVDDEGAIGRSYADAPEIDGCVYLNGDIQVKPGDIVNVQIEHSDEYDLWGTRV</sequence>
<reference key="1">
    <citation type="journal article" date="2008" name="J. Bacteriol.">
        <title>Insights into plant cell wall degradation from the genome sequence of the soil bacterium Cellvibrio japonicus.</title>
        <authorList>
            <person name="DeBoy R.T."/>
            <person name="Mongodin E.F."/>
            <person name="Fouts D.E."/>
            <person name="Tailford L.E."/>
            <person name="Khouri H."/>
            <person name="Emerson J.B."/>
            <person name="Mohamoud Y."/>
            <person name="Watkins K."/>
            <person name="Henrissat B."/>
            <person name="Gilbert H.J."/>
            <person name="Nelson K.E."/>
        </authorList>
    </citation>
    <scope>NUCLEOTIDE SEQUENCE [LARGE SCALE GENOMIC DNA]</scope>
    <source>
        <strain>Ueda107</strain>
    </source>
</reference>
<keyword id="KW-0004">4Fe-4S</keyword>
<keyword id="KW-0963">Cytoplasm</keyword>
<keyword id="KW-0408">Iron</keyword>
<keyword id="KW-0411">Iron-sulfur</keyword>
<keyword id="KW-0479">Metal-binding</keyword>
<keyword id="KW-1185">Reference proteome</keyword>
<keyword id="KW-0949">S-adenosyl-L-methionine</keyword>
<keyword id="KW-0808">Transferase</keyword>
<evidence type="ECO:0000255" key="1">
    <source>
        <dbReference type="HAMAP-Rule" id="MF_01865"/>
    </source>
</evidence>
<evidence type="ECO:0000255" key="2">
    <source>
        <dbReference type="PROSITE-ProRule" id="PRU01266"/>
    </source>
</evidence>
<organism>
    <name type="scientific">Cellvibrio japonicus (strain Ueda107)</name>
    <name type="common">Pseudomonas fluorescens subsp. cellulosa</name>
    <dbReference type="NCBI Taxonomy" id="498211"/>
    <lineage>
        <taxon>Bacteria</taxon>
        <taxon>Pseudomonadati</taxon>
        <taxon>Pseudomonadota</taxon>
        <taxon>Gammaproteobacteria</taxon>
        <taxon>Cellvibrionales</taxon>
        <taxon>Cellvibrionaceae</taxon>
        <taxon>Cellvibrio</taxon>
    </lineage>
</organism>
<dbReference type="EC" id="2.8.4.4" evidence="1"/>
<dbReference type="EMBL" id="CP000934">
    <property type="protein sequence ID" value="ACE84582.1"/>
    <property type="molecule type" value="Genomic_DNA"/>
</dbReference>
<dbReference type="SMR" id="B3PGP3"/>
<dbReference type="STRING" id="498211.CJA_1894"/>
<dbReference type="KEGG" id="cja:CJA_1894"/>
<dbReference type="eggNOG" id="COG0621">
    <property type="taxonomic scope" value="Bacteria"/>
</dbReference>
<dbReference type="HOGENOM" id="CLU_018697_0_0_6"/>
<dbReference type="Proteomes" id="UP000001036">
    <property type="component" value="Chromosome"/>
</dbReference>
<dbReference type="GO" id="GO:0005829">
    <property type="term" value="C:cytosol"/>
    <property type="evidence" value="ECO:0007669"/>
    <property type="project" value="TreeGrafter"/>
</dbReference>
<dbReference type="GO" id="GO:0051539">
    <property type="term" value="F:4 iron, 4 sulfur cluster binding"/>
    <property type="evidence" value="ECO:0007669"/>
    <property type="project" value="UniProtKB-UniRule"/>
</dbReference>
<dbReference type="GO" id="GO:0035599">
    <property type="term" value="F:aspartic acid methylthiotransferase activity"/>
    <property type="evidence" value="ECO:0007669"/>
    <property type="project" value="TreeGrafter"/>
</dbReference>
<dbReference type="GO" id="GO:0046872">
    <property type="term" value="F:metal ion binding"/>
    <property type="evidence" value="ECO:0007669"/>
    <property type="project" value="UniProtKB-KW"/>
</dbReference>
<dbReference type="GO" id="GO:0103039">
    <property type="term" value="F:protein methylthiotransferase activity"/>
    <property type="evidence" value="ECO:0007669"/>
    <property type="project" value="UniProtKB-EC"/>
</dbReference>
<dbReference type="GO" id="GO:0006400">
    <property type="term" value="P:tRNA modification"/>
    <property type="evidence" value="ECO:0007669"/>
    <property type="project" value="InterPro"/>
</dbReference>
<dbReference type="CDD" id="cd01335">
    <property type="entry name" value="Radical_SAM"/>
    <property type="match status" value="1"/>
</dbReference>
<dbReference type="FunFam" id="2.40.50.140:FF:000060">
    <property type="entry name" value="Ribosomal protein S12 methylthiotransferase RimO"/>
    <property type="match status" value="1"/>
</dbReference>
<dbReference type="FunFam" id="3.40.50.12160:FF:000002">
    <property type="entry name" value="Ribosomal protein S12 methylthiotransferase RimO"/>
    <property type="match status" value="1"/>
</dbReference>
<dbReference type="FunFam" id="3.80.30.20:FF:000001">
    <property type="entry name" value="tRNA-2-methylthio-N(6)-dimethylallyladenosine synthase 2"/>
    <property type="match status" value="1"/>
</dbReference>
<dbReference type="Gene3D" id="3.40.50.12160">
    <property type="entry name" value="Methylthiotransferase, N-terminal domain"/>
    <property type="match status" value="1"/>
</dbReference>
<dbReference type="Gene3D" id="2.40.50.140">
    <property type="entry name" value="Nucleic acid-binding proteins"/>
    <property type="match status" value="1"/>
</dbReference>
<dbReference type="Gene3D" id="3.80.30.20">
    <property type="entry name" value="tm_1862 like domain"/>
    <property type="match status" value="1"/>
</dbReference>
<dbReference type="HAMAP" id="MF_01865">
    <property type="entry name" value="MTTase_RimO"/>
    <property type="match status" value="1"/>
</dbReference>
<dbReference type="InterPro" id="IPR006638">
    <property type="entry name" value="Elp3/MiaA/NifB-like_rSAM"/>
</dbReference>
<dbReference type="InterPro" id="IPR005839">
    <property type="entry name" value="Methylthiotransferase"/>
</dbReference>
<dbReference type="InterPro" id="IPR020612">
    <property type="entry name" value="Methylthiotransferase_CS"/>
</dbReference>
<dbReference type="InterPro" id="IPR013848">
    <property type="entry name" value="Methylthiotransferase_N"/>
</dbReference>
<dbReference type="InterPro" id="IPR038135">
    <property type="entry name" value="Methylthiotransferase_N_sf"/>
</dbReference>
<dbReference type="InterPro" id="IPR012340">
    <property type="entry name" value="NA-bd_OB-fold"/>
</dbReference>
<dbReference type="InterPro" id="IPR005840">
    <property type="entry name" value="Ribosomal_uS12_MeSTrfase_RimO"/>
</dbReference>
<dbReference type="InterPro" id="IPR007197">
    <property type="entry name" value="rSAM"/>
</dbReference>
<dbReference type="InterPro" id="IPR023404">
    <property type="entry name" value="rSAM_horseshoe"/>
</dbReference>
<dbReference type="InterPro" id="IPR002792">
    <property type="entry name" value="TRAM_dom"/>
</dbReference>
<dbReference type="NCBIfam" id="TIGR01125">
    <property type="entry name" value="30S ribosomal protein S12 methylthiotransferase RimO"/>
    <property type="match status" value="1"/>
</dbReference>
<dbReference type="NCBIfam" id="TIGR00089">
    <property type="entry name" value="MiaB/RimO family radical SAM methylthiotransferase"/>
    <property type="match status" value="1"/>
</dbReference>
<dbReference type="PANTHER" id="PTHR43837">
    <property type="entry name" value="RIBOSOMAL PROTEIN S12 METHYLTHIOTRANSFERASE RIMO"/>
    <property type="match status" value="1"/>
</dbReference>
<dbReference type="PANTHER" id="PTHR43837:SF1">
    <property type="entry name" value="RIBOSOMAL PROTEIN US12 METHYLTHIOTRANSFERASE RIMO"/>
    <property type="match status" value="1"/>
</dbReference>
<dbReference type="Pfam" id="PF04055">
    <property type="entry name" value="Radical_SAM"/>
    <property type="match status" value="1"/>
</dbReference>
<dbReference type="Pfam" id="PF18693">
    <property type="entry name" value="TRAM_2"/>
    <property type="match status" value="1"/>
</dbReference>
<dbReference type="Pfam" id="PF00919">
    <property type="entry name" value="UPF0004"/>
    <property type="match status" value="1"/>
</dbReference>
<dbReference type="SFLD" id="SFLDG01082">
    <property type="entry name" value="B12-binding_domain_containing"/>
    <property type="match status" value="1"/>
</dbReference>
<dbReference type="SFLD" id="SFLDG01061">
    <property type="entry name" value="methylthiotransferase"/>
    <property type="match status" value="1"/>
</dbReference>
<dbReference type="SFLD" id="SFLDF00274">
    <property type="entry name" value="ribosomal_protein_S12_methylth"/>
    <property type="match status" value="1"/>
</dbReference>
<dbReference type="SMART" id="SM00729">
    <property type="entry name" value="Elp3"/>
    <property type="match status" value="1"/>
</dbReference>
<dbReference type="SUPFAM" id="SSF102114">
    <property type="entry name" value="Radical SAM enzymes"/>
    <property type="match status" value="1"/>
</dbReference>
<dbReference type="PROSITE" id="PS51449">
    <property type="entry name" value="MTTASE_N"/>
    <property type="match status" value="1"/>
</dbReference>
<dbReference type="PROSITE" id="PS01278">
    <property type="entry name" value="MTTASE_RADICAL"/>
    <property type="match status" value="1"/>
</dbReference>
<dbReference type="PROSITE" id="PS51918">
    <property type="entry name" value="RADICAL_SAM"/>
    <property type="match status" value="1"/>
</dbReference>
<dbReference type="PROSITE" id="PS50926">
    <property type="entry name" value="TRAM"/>
    <property type="match status" value="1"/>
</dbReference>
<comment type="function">
    <text evidence="1">Catalyzes the methylthiolation of an aspartic acid residue of ribosomal protein uS12.</text>
</comment>
<comment type="catalytic activity">
    <reaction evidence="1">
        <text>L-aspartate(89)-[ribosomal protein uS12]-hydrogen + (sulfur carrier)-SH + AH2 + 2 S-adenosyl-L-methionine = 3-methylsulfanyl-L-aspartate(89)-[ribosomal protein uS12]-hydrogen + (sulfur carrier)-H + 5'-deoxyadenosine + L-methionine + A + S-adenosyl-L-homocysteine + 2 H(+)</text>
        <dbReference type="Rhea" id="RHEA:37087"/>
        <dbReference type="Rhea" id="RHEA-COMP:10460"/>
        <dbReference type="Rhea" id="RHEA-COMP:10461"/>
        <dbReference type="Rhea" id="RHEA-COMP:14737"/>
        <dbReference type="Rhea" id="RHEA-COMP:14739"/>
        <dbReference type="ChEBI" id="CHEBI:13193"/>
        <dbReference type="ChEBI" id="CHEBI:15378"/>
        <dbReference type="ChEBI" id="CHEBI:17319"/>
        <dbReference type="ChEBI" id="CHEBI:17499"/>
        <dbReference type="ChEBI" id="CHEBI:29917"/>
        <dbReference type="ChEBI" id="CHEBI:29961"/>
        <dbReference type="ChEBI" id="CHEBI:57844"/>
        <dbReference type="ChEBI" id="CHEBI:57856"/>
        <dbReference type="ChEBI" id="CHEBI:59789"/>
        <dbReference type="ChEBI" id="CHEBI:64428"/>
        <dbReference type="ChEBI" id="CHEBI:73599"/>
        <dbReference type="EC" id="2.8.4.4"/>
    </reaction>
</comment>
<comment type="cofactor">
    <cofactor evidence="1">
        <name>[4Fe-4S] cluster</name>
        <dbReference type="ChEBI" id="CHEBI:49883"/>
    </cofactor>
    <text evidence="1">Binds 2 [4Fe-4S] clusters. One cluster is coordinated with 3 cysteines and an exchangeable S-adenosyl-L-methionine.</text>
</comment>
<comment type="subcellular location">
    <subcellularLocation>
        <location evidence="1">Cytoplasm</location>
    </subcellularLocation>
</comment>
<comment type="similarity">
    <text evidence="1">Belongs to the methylthiotransferase family. RimO subfamily.</text>
</comment>